<comment type="function">
    <text>The primary product of this enzyme is 4,2',4',6'-tetrahydroxychalcone (also termed naringenin-chalcone or chalcone) which can under specific conditions spontaneously isomerize into naringenin.</text>
</comment>
<comment type="catalytic activity">
    <reaction evidence="1">
        <text>(E)-4-coumaroyl-CoA + 3 malonyl-CoA + 3 H(+) = 2',4,4',6'-tetrahydroxychalcone + 3 CO2 + 4 CoA</text>
        <dbReference type="Rhea" id="RHEA:11128"/>
        <dbReference type="ChEBI" id="CHEBI:15378"/>
        <dbReference type="ChEBI" id="CHEBI:15413"/>
        <dbReference type="ChEBI" id="CHEBI:16526"/>
        <dbReference type="ChEBI" id="CHEBI:57287"/>
        <dbReference type="ChEBI" id="CHEBI:57384"/>
        <dbReference type="ChEBI" id="CHEBI:85008"/>
        <dbReference type="EC" id="2.3.1.74"/>
    </reaction>
</comment>
<comment type="pathway">
    <text>Secondary metabolite biosynthesis; flavonoid biosynthesis.</text>
</comment>
<comment type="similarity">
    <text evidence="2">Belongs to the thiolase-like superfamily. Chalcone/stilbene synthases family.</text>
</comment>
<evidence type="ECO:0000255" key="1">
    <source>
        <dbReference type="PROSITE-ProRule" id="PRU10023"/>
    </source>
</evidence>
<evidence type="ECO:0000305" key="2"/>
<organism>
    <name type="scientific">Callistephus chinensis</name>
    <name type="common">China aster</name>
    <name type="synonym">Callistemma chinense</name>
    <dbReference type="NCBI Taxonomy" id="13379"/>
    <lineage>
        <taxon>Eukaryota</taxon>
        <taxon>Viridiplantae</taxon>
        <taxon>Streptophyta</taxon>
        <taxon>Embryophyta</taxon>
        <taxon>Tracheophyta</taxon>
        <taxon>Spermatophyta</taxon>
        <taxon>Magnoliopsida</taxon>
        <taxon>eudicotyledons</taxon>
        <taxon>Gunneridae</taxon>
        <taxon>Pentapetalae</taxon>
        <taxon>asterids</taxon>
        <taxon>campanulids</taxon>
        <taxon>Asterales</taxon>
        <taxon>Asteraceae</taxon>
        <taxon>Asteroideae</taxon>
        <taxon>Astereae</taxon>
        <taxon>Australasian lineages</taxon>
        <taxon>Asterinae</taxon>
        <taxon>Callistephus</taxon>
    </lineage>
</organism>
<feature type="chain" id="PRO_0000215959" description="Chalcone synthase">
    <location>
        <begin position="1"/>
        <end position="398"/>
    </location>
</feature>
<feature type="active site" evidence="1">
    <location>
        <position position="167"/>
    </location>
</feature>
<keyword id="KW-0012">Acyltransferase</keyword>
<keyword id="KW-0284">Flavonoid biosynthesis</keyword>
<keyword id="KW-0808">Transferase</keyword>
<name>CHSY_CALCH</name>
<protein>
    <recommendedName>
        <fullName>Chalcone synthase</fullName>
        <ecNumber>2.3.1.74</ecNumber>
    </recommendedName>
    <alternativeName>
        <fullName>Naringenin-chalcone synthase</fullName>
    </alternativeName>
</protein>
<reference key="1">
    <citation type="submission" date="1997-07" db="EMBL/GenBank/DDBJ databases">
        <authorList>
            <person name="Henkel J."/>
            <person name="Wassenegger M."/>
            <person name="Sommer H."/>
            <person name="Forkmann G."/>
        </authorList>
    </citation>
    <scope>NUCLEOTIDE SEQUENCE [MRNA]</scope>
    <source>
        <strain>L 01</strain>
        <tissue>Petal</tissue>
    </source>
</reference>
<gene>
    <name type="primary">CHS</name>
</gene>
<sequence length="398" mass="43541">MASTIDIAAIREAQRRQGPATILAIGTATPSNCVYQADYPDYYFRITKSEHMVDLKEKFKRMCDKSMIRKRYMHLTEEYLKENPSLCEYMAPSLDARQDVVVVEVPKLGKEAATKAIKEWGQPKSKITHLIFCTTSGVDMPGADYQLTKLLGLRPSVKRFMMYQQGCFAGGTVLRLAKDLAENNKGARVLVVCSEITAVTFRGPNDTHLDSLVGQALFGDGAAAVIVGADPDLTTERPLFEMISAAQTILPDSEGAIDGHLREVGLTFHLLKDVPGLISKNIEKALTQAFSPLGITDWNSIFWIAHPGGPAILDQVELKLGLKEEKMRATRHVLSEYGNMSSACVLFIIDEMRKKSAEDGAATTGEGLDWGVLFGFGPGLTVETVVLHSLPTTMAIAT</sequence>
<proteinExistence type="evidence at transcript level"/>
<accession>P48385</accession>
<dbReference type="EC" id="2.3.1.74"/>
<dbReference type="EMBL" id="Z67988">
    <property type="protein sequence ID" value="CAA91930.1"/>
    <property type="molecule type" value="mRNA"/>
</dbReference>
<dbReference type="SMR" id="P48385"/>
<dbReference type="UniPathway" id="UPA00154"/>
<dbReference type="GO" id="GO:0016210">
    <property type="term" value="F:naringenin-chalcone synthase activity"/>
    <property type="evidence" value="ECO:0007669"/>
    <property type="project" value="UniProtKB-EC"/>
</dbReference>
<dbReference type="GO" id="GO:0009813">
    <property type="term" value="P:flavonoid biosynthetic process"/>
    <property type="evidence" value="ECO:0007669"/>
    <property type="project" value="UniProtKB-UniPathway"/>
</dbReference>
<dbReference type="GO" id="GO:0030639">
    <property type="term" value="P:polyketide biosynthetic process"/>
    <property type="evidence" value="ECO:0007669"/>
    <property type="project" value="TreeGrafter"/>
</dbReference>
<dbReference type="CDD" id="cd00831">
    <property type="entry name" value="CHS_like"/>
    <property type="match status" value="1"/>
</dbReference>
<dbReference type="FunFam" id="3.40.47.10:FF:000014">
    <property type="entry name" value="Chalcone synthase 1"/>
    <property type="match status" value="1"/>
</dbReference>
<dbReference type="FunFam" id="3.40.47.10:FF:000025">
    <property type="entry name" value="Chalcone synthase 2"/>
    <property type="match status" value="1"/>
</dbReference>
<dbReference type="Gene3D" id="3.40.47.10">
    <property type="match status" value="2"/>
</dbReference>
<dbReference type="InterPro" id="IPR012328">
    <property type="entry name" value="Chalcone/stilbene_synt_C"/>
</dbReference>
<dbReference type="InterPro" id="IPR001099">
    <property type="entry name" value="Chalcone/stilbene_synt_N"/>
</dbReference>
<dbReference type="InterPro" id="IPR018088">
    <property type="entry name" value="Chalcone/stilbene_synthase_AS"/>
</dbReference>
<dbReference type="InterPro" id="IPR011141">
    <property type="entry name" value="Polyketide_synthase_type-III"/>
</dbReference>
<dbReference type="InterPro" id="IPR016039">
    <property type="entry name" value="Thiolase-like"/>
</dbReference>
<dbReference type="PANTHER" id="PTHR11877:SF14">
    <property type="entry name" value="CHALCONE SYNTHASE"/>
    <property type="match status" value="1"/>
</dbReference>
<dbReference type="PANTHER" id="PTHR11877">
    <property type="entry name" value="HYDROXYMETHYLGLUTARYL-COA SYNTHASE"/>
    <property type="match status" value="1"/>
</dbReference>
<dbReference type="Pfam" id="PF02797">
    <property type="entry name" value="Chal_sti_synt_C"/>
    <property type="match status" value="1"/>
</dbReference>
<dbReference type="Pfam" id="PF00195">
    <property type="entry name" value="Chal_sti_synt_N"/>
    <property type="match status" value="1"/>
</dbReference>
<dbReference type="PIRSF" id="PIRSF000451">
    <property type="entry name" value="PKS_III"/>
    <property type="match status" value="1"/>
</dbReference>
<dbReference type="SUPFAM" id="SSF53901">
    <property type="entry name" value="Thiolase-like"/>
    <property type="match status" value="2"/>
</dbReference>
<dbReference type="PROSITE" id="PS00441">
    <property type="entry name" value="CHALCONE_SYNTH"/>
    <property type="match status" value="1"/>
</dbReference>